<name>SLYA_KLEP3</name>
<feature type="chain" id="PRO_1000188015" description="Transcriptional regulator SlyA">
    <location>
        <begin position="1"/>
        <end position="144"/>
    </location>
</feature>
<feature type="domain" description="HTH marR-type" evidence="1">
    <location>
        <begin position="2"/>
        <end position="135"/>
    </location>
</feature>
<feature type="DNA-binding region" description="H-T-H motif" evidence="1">
    <location>
        <begin position="49"/>
        <end position="72"/>
    </location>
</feature>
<evidence type="ECO:0000255" key="1">
    <source>
        <dbReference type="HAMAP-Rule" id="MF_01819"/>
    </source>
</evidence>
<sequence length="144" mass="16548">MESPLGSDLARLVRVWRALIDHRLKPLELTQTHWVTLHNIHQLPPEQSQIQLAKAIGIEQPSLVRTLDQLEEKGLISRQTCSSDRRAKRIKLTEKAEPLINEMEEVIGKTRDEILSGVSKQEVETLLHLIRKLEQNILDLQAKD</sequence>
<proteinExistence type="inferred from homology"/>
<comment type="function">
    <text evidence="1">Transcription regulator that can specifically activate or repress expression of target genes.</text>
</comment>
<comment type="subunit">
    <text evidence="1">Homodimer.</text>
</comment>
<comment type="similarity">
    <text evidence="1">Belongs to the SlyA family.</text>
</comment>
<protein>
    <recommendedName>
        <fullName evidence="1">Transcriptional regulator SlyA</fullName>
    </recommendedName>
</protein>
<organism>
    <name type="scientific">Klebsiella pneumoniae (strain 342)</name>
    <dbReference type="NCBI Taxonomy" id="507522"/>
    <lineage>
        <taxon>Bacteria</taxon>
        <taxon>Pseudomonadati</taxon>
        <taxon>Pseudomonadota</taxon>
        <taxon>Gammaproteobacteria</taxon>
        <taxon>Enterobacterales</taxon>
        <taxon>Enterobacteriaceae</taxon>
        <taxon>Klebsiella/Raoultella group</taxon>
        <taxon>Klebsiella</taxon>
        <taxon>Klebsiella pneumoniae complex</taxon>
    </lineage>
</organism>
<gene>
    <name evidence="1" type="primary">slyA</name>
    <name type="ordered locus">KPK_2367</name>
</gene>
<keyword id="KW-0010">Activator</keyword>
<keyword id="KW-0238">DNA-binding</keyword>
<keyword id="KW-0678">Repressor</keyword>
<keyword id="KW-0804">Transcription</keyword>
<keyword id="KW-0805">Transcription regulation</keyword>
<reference key="1">
    <citation type="journal article" date="2008" name="PLoS Genet.">
        <title>Complete genome sequence of the N2-fixing broad host range endophyte Klebsiella pneumoniae 342 and virulence predictions verified in mice.</title>
        <authorList>
            <person name="Fouts D.E."/>
            <person name="Tyler H.L."/>
            <person name="DeBoy R.T."/>
            <person name="Daugherty S."/>
            <person name="Ren Q."/>
            <person name="Badger J.H."/>
            <person name="Durkin A.S."/>
            <person name="Huot H."/>
            <person name="Shrivastava S."/>
            <person name="Kothari S."/>
            <person name="Dodson R.J."/>
            <person name="Mohamoud Y."/>
            <person name="Khouri H."/>
            <person name="Roesch L.F.W."/>
            <person name="Krogfelt K.A."/>
            <person name="Struve C."/>
            <person name="Triplett E.W."/>
            <person name="Methe B.A."/>
        </authorList>
    </citation>
    <scope>NUCLEOTIDE SEQUENCE [LARGE SCALE GENOMIC DNA]</scope>
    <source>
        <strain>342</strain>
    </source>
</reference>
<dbReference type="EMBL" id="CP000964">
    <property type="protein sequence ID" value="ACI07577.1"/>
    <property type="molecule type" value="Genomic_DNA"/>
</dbReference>
<dbReference type="SMR" id="B5XWN4"/>
<dbReference type="KEGG" id="kpe:KPK_2367"/>
<dbReference type="HOGENOM" id="CLU_083287_18_2_6"/>
<dbReference type="Proteomes" id="UP000001734">
    <property type="component" value="Chromosome"/>
</dbReference>
<dbReference type="GO" id="GO:0003677">
    <property type="term" value="F:DNA binding"/>
    <property type="evidence" value="ECO:0007669"/>
    <property type="project" value="UniProtKB-UniRule"/>
</dbReference>
<dbReference type="GO" id="GO:0003700">
    <property type="term" value="F:DNA-binding transcription factor activity"/>
    <property type="evidence" value="ECO:0007669"/>
    <property type="project" value="UniProtKB-UniRule"/>
</dbReference>
<dbReference type="GO" id="GO:0006950">
    <property type="term" value="P:response to stress"/>
    <property type="evidence" value="ECO:0007669"/>
    <property type="project" value="TreeGrafter"/>
</dbReference>
<dbReference type="FunFam" id="1.10.10.10:FF:000261">
    <property type="entry name" value="Transcriptional regulator SlyA"/>
    <property type="match status" value="1"/>
</dbReference>
<dbReference type="Gene3D" id="1.10.10.10">
    <property type="entry name" value="Winged helix-like DNA-binding domain superfamily/Winged helix DNA-binding domain"/>
    <property type="match status" value="1"/>
</dbReference>
<dbReference type="HAMAP" id="MF_01819">
    <property type="entry name" value="HTH_type_SlyA"/>
    <property type="match status" value="1"/>
</dbReference>
<dbReference type="InterPro" id="IPR000835">
    <property type="entry name" value="HTH_MarR-typ"/>
</dbReference>
<dbReference type="InterPro" id="IPR039422">
    <property type="entry name" value="MarR/SlyA-like"/>
</dbReference>
<dbReference type="InterPro" id="IPR023187">
    <property type="entry name" value="Tscrpt_reg_MarR-type_CS"/>
</dbReference>
<dbReference type="InterPro" id="IPR023071">
    <property type="entry name" value="Tscrpt_reg_SlyA"/>
</dbReference>
<dbReference type="InterPro" id="IPR036388">
    <property type="entry name" value="WH-like_DNA-bd_sf"/>
</dbReference>
<dbReference type="InterPro" id="IPR036390">
    <property type="entry name" value="WH_DNA-bd_sf"/>
</dbReference>
<dbReference type="NCBIfam" id="NF002926">
    <property type="entry name" value="PRK03573.1"/>
    <property type="match status" value="1"/>
</dbReference>
<dbReference type="PANTHER" id="PTHR33164:SF64">
    <property type="entry name" value="TRANSCRIPTIONAL REGULATOR SLYA"/>
    <property type="match status" value="1"/>
</dbReference>
<dbReference type="PANTHER" id="PTHR33164">
    <property type="entry name" value="TRANSCRIPTIONAL REGULATOR, MARR FAMILY"/>
    <property type="match status" value="1"/>
</dbReference>
<dbReference type="Pfam" id="PF01047">
    <property type="entry name" value="MarR"/>
    <property type="match status" value="1"/>
</dbReference>
<dbReference type="PRINTS" id="PR00598">
    <property type="entry name" value="HTHMARR"/>
</dbReference>
<dbReference type="SMART" id="SM00347">
    <property type="entry name" value="HTH_MARR"/>
    <property type="match status" value="1"/>
</dbReference>
<dbReference type="SUPFAM" id="SSF46785">
    <property type="entry name" value="Winged helix' DNA-binding domain"/>
    <property type="match status" value="1"/>
</dbReference>
<dbReference type="PROSITE" id="PS01117">
    <property type="entry name" value="HTH_MARR_1"/>
    <property type="match status" value="1"/>
</dbReference>
<dbReference type="PROSITE" id="PS50995">
    <property type="entry name" value="HTH_MARR_2"/>
    <property type="match status" value="1"/>
</dbReference>
<accession>B5XWN4</accession>